<gene>
    <name evidence="1" type="primary">ihfA</name>
    <name evidence="1" type="synonym">himA</name>
    <name type="ordered locus">RHECIAT_CH0001604</name>
</gene>
<accession>B3PVE1</accession>
<comment type="function">
    <text evidence="1">This protein is one of the two subunits of integration host factor, a specific DNA-binding protein that functions in genetic recombination as well as in transcriptional and translational control.</text>
</comment>
<comment type="subunit">
    <text evidence="1">Heterodimer of an alpha and a beta chain.</text>
</comment>
<comment type="similarity">
    <text evidence="1">Belongs to the bacterial histone-like protein family.</text>
</comment>
<protein>
    <recommendedName>
        <fullName evidence="1">Integration host factor subunit alpha</fullName>
        <shortName evidence="1">IHF-alpha</shortName>
    </recommendedName>
</protein>
<name>IHFA_RHIE6</name>
<keyword id="KW-0233">DNA recombination</keyword>
<keyword id="KW-0238">DNA-binding</keyword>
<keyword id="KW-0804">Transcription</keyword>
<keyword id="KW-0805">Transcription regulation</keyword>
<keyword id="KW-0810">Translation regulation</keyword>
<feature type="chain" id="PRO_1000122156" description="Integration host factor subunit alpha">
    <location>
        <begin position="1"/>
        <end position="112"/>
    </location>
</feature>
<organism>
    <name type="scientific">Rhizobium etli (strain CIAT 652)</name>
    <dbReference type="NCBI Taxonomy" id="491916"/>
    <lineage>
        <taxon>Bacteria</taxon>
        <taxon>Pseudomonadati</taxon>
        <taxon>Pseudomonadota</taxon>
        <taxon>Alphaproteobacteria</taxon>
        <taxon>Hyphomicrobiales</taxon>
        <taxon>Rhizobiaceae</taxon>
        <taxon>Rhizobium/Agrobacterium group</taxon>
        <taxon>Rhizobium</taxon>
    </lineage>
</organism>
<reference key="1">
    <citation type="journal article" date="2010" name="Appl. Environ. Microbiol.">
        <title>Conserved symbiotic plasmid DNA sequences in the multireplicon pangenomic structure of Rhizobium etli.</title>
        <authorList>
            <person name="Gonzalez V."/>
            <person name="Acosta J.L."/>
            <person name="Santamaria R.I."/>
            <person name="Bustos P."/>
            <person name="Fernandez J.L."/>
            <person name="Hernandez Gonzalez I.L."/>
            <person name="Diaz R."/>
            <person name="Flores M."/>
            <person name="Palacios R."/>
            <person name="Mora J."/>
            <person name="Davila G."/>
        </authorList>
    </citation>
    <scope>NUCLEOTIDE SEQUENCE [LARGE SCALE GENOMIC DNA]</scope>
    <source>
        <strain>CIAT 652</strain>
    </source>
</reference>
<evidence type="ECO:0000255" key="1">
    <source>
        <dbReference type="HAMAP-Rule" id="MF_00380"/>
    </source>
</evidence>
<proteinExistence type="inferred from homology"/>
<sequence>MTGKTVTRADLAESVFRKVGLSRTESAELVETVIDEICNAIVRGETVKLSSFATFQVRDKNERIGRNPKTGEEVPISPRRVMTFKASNVLKTRILKAHVSRKVKLKPQNPAP</sequence>
<dbReference type="EMBL" id="CP001074">
    <property type="protein sequence ID" value="ACE90582.1"/>
    <property type="molecule type" value="Genomic_DNA"/>
</dbReference>
<dbReference type="SMR" id="B3PVE1"/>
<dbReference type="KEGG" id="rec:RHECIAT_CH0001604"/>
<dbReference type="eggNOG" id="COG0776">
    <property type="taxonomic scope" value="Bacteria"/>
</dbReference>
<dbReference type="HOGENOM" id="CLU_105066_1_1_5"/>
<dbReference type="Proteomes" id="UP000008817">
    <property type="component" value="Chromosome"/>
</dbReference>
<dbReference type="GO" id="GO:0005829">
    <property type="term" value="C:cytosol"/>
    <property type="evidence" value="ECO:0007669"/>
    <property type="project" value="TreeGrafter"/>
</dbReference>
<dbReference type="GO" id="GO:0003677">
    <property type="term" value="F:DNA binding"/>
    <property type="evidence" value="ECO:0007669"/>
    <property type="project" value="UniProtKB-UniRule"/>
</dbReference>
<dbReference type="GO" id="GO:0030527">
    <property type="term" value="F:structural constituent of chromatin"/>
    <property type="evidence" value="ECO:0007669"/>
    <property type="project" value="InterPro"/>
</dbReference>
<dbReference type="GO" id="GO:0006310">
    <property type="term" value="P:DNA recombination"/>
    <property type="evidence" value="ECO:0007669"/>
    <property type="project" value="UniProtKB-UniRule"/>
</dbReference>
<dbReference type="GO" id="GO:0009893">
    <property type="term" value="P:positive regulation of metabolic process"/>
    <property type="evidence" value="ECO:0007669"/>
    <property type="project" value="UniProtKB-ARBA"/>
</dbReference>
<dbReference type="GO" id="GO:0006355">
    <property type="term" value="P:regulation of DNA-templated transcription"/>
    <property type="evidence" value="ECO:0007669"/>
    <property type="project" value="UniProtKB-UniRule"/>
</dbReference>
<dbReference type="GO" id="GO:0006417">
    <property type="term" value="P:regulation of translation"/>
    <property type="evidence" value="ECO:0007669"/>
    <property type="project" value="UniProtKB-UniRule"/>
</dbReference>
<dbReference type="CDD" id="cd13835">
    <property type="entry name" value="IHF_A"/>
    <property type="match status" value="1"/>
</dbReference>
<dbReference type="Gene3D" id="4.10.520.10">
    <property type="entry name" value="IHF-like DNA-binding proteins"/>
    <property type="match status" value="1"/>
</dbReference>
<dbReference type="HAMAP" id="MF_00380">
    <property type="entry name" value="IHF_alpha"/>
    <property type="match status" value="1"/>
</dbReference>
<dbReference type="InterPro" id="IPR000119">
    <property type="entry name" value="Hist_DNA-bd"/>
</dbReference>
<dbReference type="InterPro" id="IPR020816">
    <property type="entry name" value="Histone-like_DNA-bd_CS"/>
</dbReference>
<dbReference type="InterPro" id="IPR010992">
    <property type="entry name" value="IHF-like_DNA-bd_dom_sf"/>
</dbReference>
<dbReference type="InterPro" id="IPR005684">
    <property type="entry name" value="IHF_alpha"/>
</dbReference>
<dbReference type="NCBIfam" id="TIGR00987">
    <property type="entry name" value="himA"/>
    <property type="match status" value="1"/>
</dbReference>
<dbReference type="NCBIfam" id="NF001401">
    <property type="entry name" value="PRK00285.1"/>
    <property type="match status" value="1"/>
</dbReference>
<dbReference type="PANTHER" id="PTHR33175">
    <property type="entry name" value="DNA-BINDING PROTEIN HU"/>
    <property type="match status" value="1"/>
</dbReference>
<dbReference type="PANTHER" id="PTHR33175:SF2">
    <property type="entry name" value="INTEGRATION HOST FACTOR SUBUNIT ALPHA"/>
    <property type="match status" value="1"/>
</dbReference>
<dbReference type="Pfam" id="PF00216">
    <property type="entry name" value="Bac_DNA_binding"/>
    <property type="match status" value="1"/>
</dbReference>
<dbReference type="PRINTS" id="PR01727">
    <property type="entry name" value="DNABINDINGHU"/>
</dbReference>
<dbReference type="SMART" id="SM00411">
    <property type="entry name" value="BHL"/>
    <property type="match status" value="1"/>
</dbReference>
<dbReference type="SUPFAM" id="SSF47729">
    <property type="entry name" value="IHF-like DNA-binding proteins"/>
    <property type="match status" value="1"/>
</dbReference>
<dbReference type="PROSITE" id="PS00045">
    <property type="entry name" value="HISTONE_LIKE"/>
    <property type="match status" value="1"/>
</dbReference>